<gene>
    <name evidence="1" type="primary">ccmA</name>
    <name type="ordered locus">Bxeno_C0349</name>
    <name type="ORF">Bxe_C0370</name>
</gene>
<keyword id="KW-0067">ATP-binding</keyword>
<keyword id="KW-0997">Cell inner membrane</keyword>
<keyword id="KW-1003">Cell membrane</keyword>
<keyword id="KW-0201">Cytochrome c-type biogenesis</keyword>
<keyword id="KW-0472">Membrane</keyword>
<keyword id="KW-0547">Nucleotide-binding</keyword>
<keyword id="KW-1185">Reference proteome</keyword>
<keyword id="KW-1278">Translocase</keyword>
<keyword id="KW-0813">Transport</keyword>
<sequence length="228" mass="24182">MLSIERLGVGRGGQMVASGIDLCIEAGWALQIHGANGSGKTTLLRVLAGLMPPAGGQVSWYGANVRAHPEKFRRDLAFVGHANGVNDDLTVLENLRFATLLGAGSGAPDGTSSVPASGRSGVAAPPSRRDMLARAGMLPLQHTRAGCLSQGQRRRVALARLMLDRKPLWLLDEPGDALDDSASGWLHECLALHMQDGGIVVATTHRSLQTPAARTRHLHLERSGAWLD</sequence>
<proteinExistence type="inferred from homology"/>
<feature type="chain" id="PRO_0000271919" description="Cytochrome c biogenesis ATP-binding export protein CcmA">
    <location>
        <begin position="1"/>
        <end position="228"/>
    </location>
</feature>
<feature type="domain" description="ABC transporter" evidence="1">
    <location>
        <begin position="2"/>
        <end position="227"/>
    </location>
</feature>
<feature type="region of interest" description="Disordered" evidence="2">
    <location>
        <begin position="106"/>
        <end position="126"/>
    </location>
</feature>
<feature type="binding site" evidence="1">
    <location>
        <begin position="34"/>
        <end position="41"/>
    </location>
    <ligand>
        <name>ATP</name>
        <dbReference type="ChEBI" id="CHEBI:30616"/>
    </ligand>
</feature>
<reference key="1">
    <citation type="journal article" date="2006" name="Proc. Natl. Acad. Sci. U.S.A.">
        <title>Burkholderia xenovorans LB400 harbors a multi-replicon, 9.73-Mbp genome shaped for versatility.</title>
        <authorList>
            <person name="Chain P.S.G."/>
            <person name="Denef V.J."/>
            <person name="Konstantinidis K.T."/>
            <person name="Vergez L.M."/>
            <person name="Agullo L."/>
            <person name="Reyes V.L."/>
            <person name="Hauser L."/>
            <person name="Cordova M."/>
            <person name="Gomez L."/>
            <person name="Gonzalez M."/>
            <person name="Land M."/>
            <person name="Lao V."/>
            <person name="Larimer F."/>
            <person name="LiPuma J.J."/>
            <person name="Mahenthiralingam E."/>
            <person name="Malfatti S.A."/>
            <person name="Marx C.J."/>
            <person name="Parnell J.J."/>
            <person name="Ramette A."/>
            <person name="Richardson P."/>
            <person name="Seeger M."/>
            <person name="Smith D."/>
            <person name="Spilker T."/>
            <person name="Sul W.J."/>
            <person name="Tsoi T.V."/>
            <person name="Ulrich L.E."/>
            <person name="Zhulin I.B."/>
            <person name="Tiedje J.M."/>
        </authorList>
    </citation>
    <scope>NUCLEOTIDE SEQUENCE [LARGE SCALE GENOMIC DNA]</scope>
    <source>
        <strain>LB400</strain>
    </source>
</reference>
<evidence type="ECO:0000255" key="1">
    <source>
        <dbReference type="HAMAP-Rule" id="MF_01707"/>
    </source>
</evidence>
<evidence type="ECO:0000256" key="2">
    <source>
        <dbReference type="SAM" id="MobiDB-lite"/>
    </source>
</evidence>
<organism>
    <name type="scientific">Paraburkholderia xenovorans (strain LB400)</name>
    <dbReference type="NCBI Taxonomy" id="266265"/>
    <lineage>
        <taxon>Bacteria</taxon>
        <taxon>Pseudomonadati</taxon>
        <taxon>Pseudomonadota</taxon>
        <taxon>Betaproteobacteria</taxon>
        <taxon>Burkholderiales</taxon>
        <taxon>Burkholderiaceae</taxon>
        <taxon>Paraburkholderia</taxon>
    </lineage>
</organism>
<name>CCMA_PARXL</name>
<accession>Q13I12</accession>
<protein>
    <recommendedName>
        <fullName evidence="1">Cytochrome c biogenesis ATP-binding export protein CcmA</fullName>
        <ecNumber evidence="1">7.6.2.5</ecNumber>
    </recommendedName>
    <alternativeName>
        <fullName evidence="1">Heme exporter protein A</fullName>
    </alternativeName>
</protein>
<dbReference type="EC" id="7.6.2.5" evidence="1"/>
<dbReference type="EMBL" id="CP000272">
    <property type="protein sequence ID" value="ABE36277.1"/>
    <property type="molecule type" value="Genomic_DNA"/>
</dbReference>
<dbReference type="RefSeq" id="WP_011493537.1">
    <property type="nucleotide sequence ID" value="NC_007953.1"/>
</dbReference>
<dbReference type="SMR" id="Q13I12"/>
<dbReference type="STRING" id="266265.Bxe_C0370"/>
<dbReference type="KEGG" id="bxb:DR64_8071"/>
<dbReference type="KEGG" id="bxe:Bxe_C0370"/>
<dbReference type="PATRIC" id="fig|266265.5.peg.8139"/>
<dbReference type="eggNOG" id="COG4133">
    <property type="taxonomic scope" value="Bacteria"/>
</dbReference>
<dbReference type="OrthoDB" id="9800654at2"/>
<dbReference type="Proteomes" id="UP000001817">
    <property type="component" value="Chromosome 3"/>
</dbReference>
<dbReference type="GO" id="GO:0005886">
    <property type="term" value="C:plasma membrane"/>
    <property type="evidence" value="ECO:0007669"/>
    <property type="project" value="UniProtKB-SubCell"/>
</dbReference>
<dbReference type="GO" id="GO:0015439">
    <property type="term" value="F:ABC-type heme transporter activity"/>
    <property type="evidence" value="ECO:0007669"/>
    <property type="project" value="UniProtKB-EC"/>
</dbReference>
<dbReference type="GO" id="GO:0005524">
    <property type="term" value="F:ATP binding"/>
    <property type="evidence" value="ECO:0007669"/>
    <property type="project" value="UniProtKB-KW"/>
</dbReference>
<dbReference type="GO" id="GO:0016887">
    <property type="term" value="F:ATP hydrolysis activity"/>
    <property type="evidence" value="ECO:0007669"/>
    <property type="project" value="InterPro"/>
</dbReference>
<dbReference type="GO" id="GO:0017004">
    <property type="term" value="P:cytochrome complex assembly"/>
    <property type="evidence" value="ECO:0007669"/>
    <property type="project" value="UniProtKB-KW"/>
</dbReference>
<dbReference type="Gene3D" id="3.40.50.300">
    <property type="entry name" value="P-loop containing nucleotide triphosphate hydrolases"/>
    <property type="match status" value="1"/>
</dbReference>
<dbReference type="InterPro" id="IPR003593">
    <property type="entry name" value="AAA+_ATPase"/>
</dbReference>
<dbReference type="InterPro" id="IPR003439">
    <property type="entry name" value="ABC_transporter-like_ATP-bd"/>
</dbReference>
<dbReference type="InterPro" id="IPR017871">
    <property type="entry name" value="ABC_transporter-like_CS"/>
</dbReference>
<dbReference type="InterPro" id="IPR005895">
    <property type="entry name" value="ABC_transptr_haem_export_CcmA"/>
</dbReference>
<dbReference type="InterPro" id="IPR027417">
    <property type="entry name" value="P-loop_NTPase"/>
</dbReference>
<dbReference type="NCBIfam" id="TIGR01189">
    <property type="entry name" value="ccmA"/>
    <property type="match status" value="1"/>
</dbReference>
<dbReference type="PANTHER" id="PTHR43499">
    <property type="entry name" value="ABC TRANSPORTER I FAMILY MEMBER 1"/>
    <property type="match status" value="1"/>
</dbReference>
<dbReference type="PANTHER" id="PTHR43499:SF1">
    <property type="entry name" value="ABC TRANSPORTER I FAMILY MEMBER 1"/>
    <property type="match status" value="1"/>
</dbReference>
<dbReference type="Pfam" id="PF00005">
    <property type="entry name" value="ABC_tran"/>
    <property type="match status" value="1"/>
</dbReference>
<dbReference type="SMART" id="SM00382">
    <property type="entry name" value="AAA"/>
    <property type="match status" value="1"/>
</dbReference>
<dbReference type="SUPFAM" id="SSF52540">
    <property type="entry name" value="P-loop containing nucleoside triphosphate hydrolases"/>
    <property type="match status" value="1"/>
</dbReference>
<dbReference type="PROSITE" id="PS00211">
    <property type="entry name" value="ABC_TRANSPORTER_1"/>
    <property type="match status" value="1"/>
</dbReference>
<dbReference type="PROSITE" id="PS50893">
    <property type="entry name" value="ABC_TRANSPORTER_2"/>
    <property type="match status" value="1"/>
</dbReference>
<dbReference type="PROSITE" id="PS51243">
    <property type="entry name" value="CCMA"/>
    <property type="match status" value="1"/>
</dbReference>
<comment type="function">
    <text evidence="1">Part of the ABC transporter complex CcmAB involved in the biogenesis of c-type cytochromes; once thought to export heme, this seems not to be the case, but its exact role is uncertain. Responsible for energy coupling to the transport system.</text>
</comment>
<comment type="catalytic activity">
    <reaction evidence="1">
        <text>heme b(in) + ATP + H2O = heme b(out) + ADP + phosphate + H(+)</text>
        <dbReference type="Rhea" id="RHEA:19261"/>
        <dbReference type="ChEBI" id="CHEBI:15377"/>
        <dbReference type="ChEBI" id="CHEBI:15378"/>
        <dbReference type="ChEBI" id="CHEBI:30616"/>
        <dbReference type="ChEBI" id="CHEBI:43474"/>
        <dbReference type="ChEBI" id="CHEBI:60344"/>
        <dbReference type="ChEBI" id="CHEBI:456216"/>
        <dbReference type="EC" id="7.6.2.5"/>
    </reaction>
</comment>
<comment type="subunit">
    <text evidence="1">The complex is composed of two ATP-binding proteins (CcmA) and two transmembrane proteins (CcmB).</text>
</comment>
<comment type="subcellular location">
    <subcellularLocation>
        <location evidence="1">Cell inner membrane</location>
        <topology evidence="1">Peripheral membrane protein</topology>
    </subcellularLocation>
</comment>
<comment type="similarity">
    <text evidence="1">Belongs to the ABC transporter superfamily. CcmA exporter (TC 3.A.1.107) family.</text>
</comment>